<feature type="chain" id="PRO_1000131292" description="ATP-dependent RNA helicase RhlB">
    <location>
        <begin position="1"/>
        <end position="421"/>
    </location>
</feature>
<feature type="domain" description="Helicase ATP-binding" evidence="1">
    <location>
        <begin position="40"/>
        <end position="219"/>
    </location>
</feature>
<feature type="domain" description="Helicase C-terminal" evidence="1">
    <location>
        <begin position="245"/>
        <end position="390"/>
    </location>
</feature>
<feature type="region of interest" description="Disordered" evidence="2">
    <location>
        <begin position="392"/>
        <end position="421"/>
    </location>
</feature>
<feature type="short sequence motif" description="Q motif">
    <location>
        <begin position="9"/>
        <end position="37"/>
    </location>
</feature>
<feature type="short sequence motif" description="DEAD box">
    <location>
        <begin position="165"/>
        <end position="168"/>
    </location>
</feature>
<feature type="compositionally biased region" description="Low complexity" evidence="2">
    <location>
        <begin position="402"/>
        <end position="414"/>
    </location>
</feature>
<feature type="binding site" evidence="1">
    <location>
        <begin position="53"/>
        <end position="60"/>
    </location>
    <ligand>
        <name>ATP</name>
        <dbReference type="ChEBI" id="CHEBI:30616"/>
    </ligand>
</feature>
<gene>
    <name evidence="1" type="primary">rhlB</name>
    <name type="ordered locus">ECSE_4062</name>
</gene>
<comment type="function">
    <text evidence="1">DEAD-box RNA helicase involved in RNA degradation. Has RNA-dependent ATPase activity and unwinds double-stranded RNA.</text>
</comment>
<comment type="catalytic activity">
    <reaction evidence="1">
        <text>ATP + H2O = ADP + phosphate + H(+)</text>
        <dbReference type="Rhea" id="RHEA:13065"/>
        <dbReference type="ChEBI" id="CHEBI:15377"/>
        <dbReference type="ChEBI" id="CHEBI:15378"/>
        <dbReference type="ChEBI" id="CHEBI:30616"/>
        <dbReference type="ChEBI" id="CHEBI:43474"/>
        <dbReference type="ChEBI" id="CHEBI:456216"/>
        <dbReference type="EC" id="3.6.4.13"/>
    </reaction>
</comment>
<comment type="subunit">
    <text evidence="1">Component of the RNA degradosome, which is a multiprotein complex involved in RNA processing and mRNA degradation.</text>
</comment>
<comment type="subcellular location">
    <subcellularLocation>
        <location evidence="1">Cytoplasm</location>
    </subcellularLocation>
</comment>
<comment type="similarity">
    <text evidence="1">Belongs to the DEAD box helicase family. RhlB subfamily.</text>
</comment>
<proteinExistence type="inferred from homology"/>
<protein>
    <recommendedName>
        <fullName evidence="1">ATP-dependent RNA helicase RhlB</fullName>
        <ecNumber evidence="1">3.6.4.13</ecNumber>
    </recommendedName>
</protein>
<keyword id="KW-0067">ATP-binding</keyword>
<keyword id="KW-0963">Cytoplasm</keyword>
<keyword id="KW-0347">Helicase</keyword>
<keyword id="KW-0378">Hydrolase</keyword>
<keyword id="KW-0547">Nucleotide-binding</keyword>
<keyword id="KW-0694">RNA-binding</keyword>
<dbReference type="EC" id="3.6.4.13" evidence="1"/>
<dbReference type="EMBL" id="AP009240">
    <property type="protein sequence ID" value="BAG79586.1"/>
    <property type="molecule type" value="Genomic_DNA"/>
</dbReference>
<dbReference type="RefSeq" id="WP_000047499.1">
    <property type="nucleotide sequence ID" value="NC_011415.1"/>
</dbReference>
<dbReference type="SMR" id="B6I4B6"/>
<dbReference type="GeneID" id="93778164"/>
<dbReference type="KEGG" id="ecy:ECSE_4062"/>
<dbReference type="HOGENOM" id="CLU_003041_1_3_6"/>
<dbReference type="Proteomes" id="UP000008199">
    <property type="component" value="Chromosome"/>
</dbReference>
<dbReference type="GO" id="GO:0005829">
    <property type="term" value="C:cytosol"/>
    <property type="evidence" value="ECO:0007669"/>
    <property type="project" value="TreeGrafter"/>
</dbReference>
<dbReference type="GO" id="GO:0005524">
    <property type="term" value="F:ATP binding"/>
    <property type="evidence" value="ECO:0007669"/>
    <property type="project" value="UniProtKB-UniRule"/>
</dbReference>
<dbReference type="GO" id="GO:0016887">
    <property type="term" value="F:ATP hydrolysis activity"/>
    <property type="evidence" value="ECO:0007669"/>
    <property type="project" value="RHEA"/>
</dbReference>
<dbReference type="GO" id="GO:0003723">
    <property type="term" value="F:RNA binding"/>
    <property type="evidence" value="ECO:0007669"/>
    <property type="project" value="UniProtKB-UniRule"/>
</dbReference>
<dbReference type="GO" id="GO:0003724">
    <property type="term" value="F:RNA helicase activity"/>
    <property type="evidence" value="ECO:0007669"/>
    <property type="project" value="UniProtKB-UniRule"/>
</dbReference>
<dbReference type="GO" id="GO:0006401">
    <property type="term" value="P:RNA catabolic process"/>
    <property type="evidence" value="ECO:0007669"/>
    <property type="project" value="UniProtKB-UniRule"/>
</dbReference>
<dbReference type="CDD" id="cd00268">
    <property type="entry name" value="DEADc"/>
    <property type="match status" value="1"/>
</dbReference>
<dbReference type="CDD" id="cd18787">
    <property type="entry name" value="SF2_C_DEAD"/>
    <property type="match status" value="1"/>
</dbReference>
<dbReference type="FunFam" id="3.40.50.300:FF:000008">
    <property type="entry name" value="ATP-dependent RNA helicase RhlB"/>
    <property type="match status" value="1"/>
</dbReference>
<dbReference type="FunFam" id="3.40.50.300:FF:000312">
    <property type="entry name" value="ATP-dependent RNA helicase RhlB"/>
    <property type="match status" value="1"/>
</dbReference>
<dbReference type="Gene3D" id="3.40.50.300">
    <property type="entry name" value="P-loop containing nucleotide triphosphate hydrolases"/>
    <property type="match status" value="2"/>
</dbReference>
<dbReference type="HAMAP" id="MF_00661">
    <property type="entry name" value="DEAD_helicase_RhlB"/>
    <property type="match status" value="1"/>
</dbReference>
<dbReference type="InterPro" id="IPR011545">
    <property type="entry name" value="DEAD/DEAH_box_helicase_dom"/>
</dbReference>
<dbReference type="InterPro" id="IPR050079">
    <property type="entry name" value="DEAD_box_RNA_helicase"/>
</dbReference>
<dbReference type="InterPro" id="IPR014001">
    <property type="entry name" value="Helicase_ATP-bd"/>
</dbReference>
<dbReference type="InterPro" id="IPR001650">
    <property type="entry name" value="Helicase_C-like"/>
</dbReference>
<dbReference type="InterPro" id="IPR027417">
    <property type="entry name" value="P-loop_NTPase"/>
</dbReference>
<dbReference type="InterPro" id="IPR000629">
    <property type="entry name" value="RNA-helicase_DEAD-box_CS"/>
</dbReference>
<dbReference type="InterPro" id="IPR023554">
    <property type="entry name" value="RNA_helicase_ATP-dep_RhlB"/>
</dbReference>
<dbReference type="InterPro" id="IPR014014">
    <property type="entry name" value="RNA_helicase_DEAD_Q_motif"/>
</dbReference>
<dbReference type="NCBIfam" id="NF003419">
    <property type="entry name" value="PRK04837.1"/>
    <property type="match status" value="1"/>
</dbReference>
<dbReference type="PANTHER" id="PTHR47959:SF10">
    <property type="entry name" value="ATP-DEPENDENT RNA HELICASE RHLB"/>
    <property type="match status" value="1"/>
</dbReference>
<dbReference type="PANTHER" id="PTHR47959">
    <property type="entry name" value="ATP-DEPENDENT RNA HELICASE RHLE-RELATED"/>
    <property type="match status" value="1"/>
</dbReference>
<dbReference type="Pfam" id="PF00270">
    <property type="entry name" value="DEAD"/>
    <property type="match status" value="1"/>
</dbReference>
<dbReference type="Pfam" id="PF00271">
    <property type="entry name" value="Helicase_C"/>
    <property type="match status" value="1"/>
</dbReference>
<dbReference type="SMART" id="SM00487">
    <property type="entry name" value="DEXDc"/>
    <property type="match status" value="1"/>
</dbReference>
<dbReference type="SMART" id="SM00490">
    <property type="entry name" value="HELICc"/>
    <property type="match status" value="1"/>
</dbReference>
<dbReference type="SUPFAM" id="SSF52540">
    <property type="entry name" value="P-loop containing nucleoside triphosphate hydrolases"/>
    <property type="match status" value="1"/>
</dbReference>
<dbReference type="PROSITE" id="PS00039">
    <property type="entry name" value="DEAD_ATP_HELICASE"/>
    <property type="match status" value="1"/>
</dbReference>
<dbReference type="PROSITE" id="PS51192">
    <property type="entry name" value="HELICASE_ATP_BIND_1"/>
    <property type="match status" value="1"/>
</dbReference>
<dbReference type="PROSITE" id="PS51194">
    <property type="entry name" value="HELICASE_CTER"/>
    <property type="match status" value="1"/>
</dbReference>
<dbReference type="PROSITE" id="PS51195">
    <property type="entry name" value="Q_MOTIF"/>
    <property type="match status" value="1"/>
</dbReference>
<accession>B6I4B6</accession>
<organism>
    <name type="scientific">Escherichia coli (strain SE11)</name>
    <dbReference type="NCBI Taxonomy" id="409438"/>
    <lineage>
        <taxon>Bacteria</taxon>
        <taxon>Pseudomonadati</taxon>
        <taxon>Pseudomonadota</taxon>
        <taxon>Gammaproteobacteria</taxon>
        <taxon>Enterobacterales</taxon>
        <taxon>Enterobacteriaceae</taxon>
        <taxon>Escherichia</taxon>
    </lineage>
</organism>
<reference key="1">
    <citation type="journal article" date="2008" name="DNA Res.">
        <title>Complete genome sequence and comparative analysis of the wild-type commensal Escherichia coli strain SE11 isolated from a healthy adult.</title>
        <authorList>
            <person name="Oshima K."/>
            <person name="Toh H."/>
            <person name="Ogura Y."/>
            <person name="Sasamoto H."/>
            <person name="Morita H."/>
            <person name="Park S.-H."/>
            <person name="Ooka T."/>
            <person name="Iyoda S."/>
            <person name="Taylor T.D."/>
            <person name="Hayashi T."/>
            <person name="Itoh K."/>
            <person name="Hattori M."/>
        </authorList>
    </citation>
    <scope>NUCLEOTIDE SEQUENCE [LARGE SCALE GENOMIC DNA]</scope>
    <source>
        <strain>SE11</strain>
    </source>
</reference>
<name>RHLB_ECOSE</name>
<sequence>MSKTHLTEQKFSDFALHPKVVEALEKKGFHNCTPIQALALPLTLAGRDVAGQAQTGTGKTMAFLTSTFHYLLSHPAIADRKVNQPRALIMAPTRELAVQIHADAEPLAEATGLKLGLAYGGDGYDKQLKVLESGVDILIGTTGRLIDYAKQNHINLGAIQVVVLDEADRMYDLGFIKDIRWLFRRMPPANQRLNMLFSATLSYRVRELAFEQMNNAEYIEVEPEQKTGHRIKEELFYPSNEEKMRLLQTLIEEEWPDRAIIFANTKHRCEEIWGHLAADGHRVGLLTGDVAQKKRLRILDEFTRGDLDILVATDVAARGLHIPAVTHVFNYDLPDDCEDYVHRIGRTGRAGASGHSISLACEEYALNLPAIETYIGHSIPVSKYNPDALMTDLPKPLRLTRPRTGNGPRRTGAPRNRRRSG</sequence>
<evidence type="ECO:0000255" key="1">
    <source>
        <dbReference type="HAMAP-Rule" id="MF_00661"/>
    </source>
</evidence>
<evidence type="ECO:0000256" key="2">
    <source>
        <dbReference type="SAM" id="MobiDB-lite"/>
    </source>
</evidence>